<accession>A2CC35</accession>
<reference key="1">
    <citation type="journal article" date="2007" name="PLoS Genet.">
        <title>Patterns and implications of gene gain and loss in the evolution of Prochlorococcus.</title>
        <authorList>
            <person name="Kettler G.C."/>
            <person name="Martiny A.C."/>
            <person name="Huang K."/>
            <person name="Zucker J."/>
            <person name="Coleman M.L."/>
            <person name="Rodrigue S."/>
            <person name="Chen F."/>
            <person name="Lapidus A."/>
            <person name="Ferriera S."/>
            <person name="Johnson J."/>
            <person name="Steglich C."/>
            <person name="Church G.M."/>
            <person name="Richardson P."/>
            <person name="Chisholm S.W."/>
        </authorList>
    </citation>
    <scope>NUCLEOTIDE SEQUENCE [LARGE SCALE GENOMIC DNA]</scope>
    <source>
        <strain>MIT 9303</strain>
    </source>
</reference>
<gene>
    <name evidence="1" type="primary">rpmC</name>
    <name evidence="1" type="synonym">rpl29</name>
    <name type="ordered locus">P9303_23101</name>
</gene>
<name>RL29_PROM3</name>
<dbReference type="EMBL" id="CP000554">
    <property type="protein sequence ID" value="ABM79045.1"/>
    <property type="molecule type" value="Genomic_DNA"/>
</dbReference>
<dbReference type="RefSeq" id="WP_011826911.1">
    <property type="nucleotide sequence ID" value="NC_008820.1"/>
</dbReference>
<dbReference type="SMR" id="A2CC35"/>
<dbReference type="STRING" id="59922.P9303_23101"/>
<dbReference type="KEGG" id="pmf:P9303_23101"/>
<dbReference type="HOGENOM" id="CLU_158491_0_1_3"/>
<dbReference type="BioCyc" id="PMAR59922:G1G80-2027-MONOMER"/>
<dbReference type="Proteomes" id="UP000002274">
    <property type="component" value="Chromosome"/>
</dbReference>
<dbReference type="GO" id="GO:0022625">
    <property type="term" value="C:cytosolic large ribosomal subunit"/>
    <property type="evidence" value="ECO:0007669"/>
    <property type="project" value="TreeGrafter"/>
</dbReference>
<dbReference type="GO" id="GO:0003735">
    <property type="term" value="F:structural constituent of ribosome"/>
    <property type="evidence" value="ECO:0007669"/>
    <property type="project" value="InterPro"/>
</dbReference>
<dbReference type="GO" id="GO:0006412">
    <property type="term" value="P:translation"/>
    <property type="evidence" value="ECO:0007669"/>
    <property type="project" value="UniProtKB-UniRule"/>
</dbReference>
<dbReference type="CDD" id="cd00427">
    <property type="entry name" value="Ribosomal_L29_HIP"/>
    <property type="match status" value="1"/>
</dbReference>
<dbReference type="FunFam" id="1.10.287.310:FF:000001">
    <property type="entry name" value="50S ribosomal protein L29"/>
    <property type="match status" value="1"/>
</dbReference>
<dbReference type="Gene3D" id="1.10.287.310">
    <property type="match status" value="1"/>
</dbReference>
<dbReference type="HAMAP" id="MF_00374">
    <property type="entry name" value="Ribosomal_uL29"/>
    <property type="match status" value="1"/>
</dbReference>
<dbReference type="InterPro" id="IPR050063">
    <property type="entry name" value="Ribosomal_protein_uL29"/>
</dbReference>
<dbReference type="InterPro" id="IPR001854">
    <property type="entry name" value="Ribosomal_uL29"/>
</dbReference>
<dbReference type="InterPro" id="IPR036049">
    <property type="entry name" value="Ribosomal_uL29_sf"/>
</dbReference>
<dbReference type="NCBIfam" id="TIGR00012">
    <property type="entry name" value="L29"/>
    <property type="match status" value="1"/>
</dbReference>
<dbReference type="PANTHER" id="PTHR10916">
    <property type="entry name" value="60S RIBOSOMAL PROTEIN L35/50S RIBOSOMAL PROTEIN L29"/>
    <property type="match status" value="1"/>
</dbReference>
<dbReference type="PANTHER" id="PTHR10916:SF0">
    <property type="entry name" value="LARGE RIBOSOMAL SUBUNIT PROTEIN UL29C"/>
    <property type="match status" value="1"/>
</dbReference>
<dbReference type="Pfam" id="PF00831">
    <property type="entry name" value="Ribosomal_L29"/>
    <property type="match status" value="1"/>
</dbReference>
<dbReference type="SUPFAM" id="SSF46561">
    <property type="entry name" value="Ribosomal protein L29 (L29p)"/>
    <property type="match status" value="1"/>
</dbReference>
<evidence type="ECO:0000255" key="1">
    <source>
        <dbReference type="HAMAP-Rule" id="MF_00374"/>
    </source>
</evidence>
<evidence type="ECO:0000305" key="2"/>
<organism>
    <name type="scientific">Prochlorococcus marinus (strain MIT 9303)</name>
    <dbReference type="NCBI Taxonomy" id="59922"/>
    <lineage>
        <taxon>Bacteria</taxon>
        <taxon>Bacillati</taxon>
        <taxon>Cyanobacteriota</taxon>
        <taxon>Cyanophyceae</taxon>
        <taxon>Synechococcales</taxon>
        <taxon>Prochlorococcaceae</taxon>
        <taxon>Prochlorococcus</taxon>
    </lineage>
</organism>
<keyword id="KW-0687">Ribonucleoprotein</keyword>
<keyword id="KW-0689">Ribosomal protein</keyword>
<comment type="similarity">
    <text evidence="1">Belongs to the universal ribosomal protein uL29 family.</text>
</comment>
<sequence length="70" mass="8066">MAHPKAAEVRKLTDADITEQIDGIRRELFDLRFQQATRQLSNTHRFKESRTKLAQLLTVQKERSRSAAAS</sequence>
<protein>
    <recommendedName>
        <fullName evidence="1">Large ribosomal subunit protein uL29</fullName>
    </recommendedName>
    <alternativeName>
        <fullName evidence="2">50S ribosomal protein L29</fullName>
    </alternativeName>
</protein>
<proteinExistence type="inferred from homology"/>
<feature type="chain" id="PRO_1000007554" description="Large ribosomal subunit protein uL29">
    <location>
        <begin position="1"/>
        <end position="70"/>
    </location>
</feature>